<gene>
    <name type="primary">nanE</name>
    <name type="ordered locus">SSU1230</name>
</gene>
<accession>C5VXY0</accession>
<accession>Q8RR39</accession>
<accession>Q8RR48</accession>
<accession>Q8VVF7</accession>
<accession>Q8VVG0</accession>
<accession>Q93HW6</accession>
<reference key="1">
    <citation type="journal article" date="2009" name="PLoS ONE">
        <title>Rapid evolution of virulence and drug resistance in the emerging zoonotic pathogen Streptococcus suis.</title>
        <authorList>
            <person name="Holden M.T.G."/>
            <person name="Hauser H."/>
            <person name="Sanders M."/>
            <person name="Ngo T.H."/>
            <person name="Cherevach I."/>
            <person name="Cronin A."/>
            <person name="Goodhead I."/>
            <person name="Mungall K."/>
            <person name="Quail M.A."/>
            <person name="Price C."/>
            <person name="Rabbinowitsch E."/>
            <person name="Sharp S."/>
            <person name="Croucher N.J."/>
            <person name="Chieu T.B."/>
            <person name="Mai N.T.H."/>
            <person name="Diep T.S."/>
            <person name="Chinh N.T."/>
            <person name="Kehoe M."/>
            <person name="Leigh J.A."/>
            <person name="Ward P.N."/>
            <person name="Dowson C.G."/>
            <person name="Whatmore A.M."/>
            <person name="Chanter N."/>
            <person name="Iversen P."/>
            <person name="Gottschalk M."/>
            <person name="Slater J.D."/>
            <person name="Smith H.E."/>
            <person name="Spratt B.G."/>
            <person name="Xu J."/>
            <person name="Ye C."/>
            <person name="Bentley S."/>
            <person name="Barrell B.G."/>
            <person name="Schultsz C."/>
            <person name="Maskell D.J."/>
            <person name="Parkhill J."/>
        </authorList>
    </citation>
    <scope>NUCLEOTIDE SEQUENCE [LARGE SCALE GENOMIC DNA]</scope>
    <source>
        <strain>P1/7</strain>
    </source>
</reference>
<reference key="2">
    <citation type="journal article" date="2001" name="Infect. Immun.">
        <title>Distribution and genetic diversity of suilysin in Streptococcus suis isolated from different diseases of pigs and characterization of the genetic basis of suilysin absence.</title>
        <authorList>
            <person name="King S.J."/>
            <person name="Heath O.J."/>
            <person name="Luque I."/>
            <person name="Tarradas C."/>
            <person name="Dowson C."/>
            <person name="Whatmore A.M."/>
        </authorList>
    </citation>
    <scope>NUCLEOTIDE SEQUENCE [GENOMIC DNA] OF 1-144</scope>
</reference>
<protein>
    <recommendedName>
        <fullName>Putative N-acetylmannosamine-6-phosphate 2-epimerase</fullName>
        <ecNumber>5.1.3.9</ecNumber>
    </recommendedName>
    <alternativeName>
        <fullName>ManNAc-6-P epimerase</fullName>
    </alternativeName>
</protein>
<organism>
    <name type="scientific">Streptococcus suis (strain P1/7)</name>
    <dbReference type="NCBI Taxonomy" id="218494"/>
    <lineage>
        <taxon>Bacteria</taxon>
        <taxon>Bacillati</taxon>
        <taxon>Bacillota</taxon>
        <taxon>Bacilli</taxon>
        <taxon>Lactobacillales</taxon>
        <taxon>Streptococcaceae</taxon>
        <taxon>Streptococcus</taxon>
    </lineage>
</organism>
<comment type="function">
    <text evidence="1">Converts N-acetylmannosamine-6-phosphate (ManNAc-6-P) to N-acetylglucosamine-6-phosphate (GlcNAc-6-P).</text>
</comment>
<comment type="catalytic activity">
    <reaction>
        <text>an N-acyl-D-glucosamine 6-phosphate = an N-acyl-D-mannosamine 6-phosphate</text>
        <dbReference type="Rhea" id="RHEA:23932"/>
        <dbReference type="ChEBI" id="CHEBI:57599"/>
        <dbReference type="ChEBI" id="CHEBI:57666"/>
        <dbReference type="EC" id="5.1.3.9"/>
    </reaction>
</comment>
<comment type="pathway">
    <text>Amino-sugar metabolism; N-acetylneuraminate degradation; D-fructose 6-phosphate from N-acetylneuraminate: step 3/5.</text>
</comment>
<comment type="similarity">
    <text evidence="1">Belongs to the NanE family.</text>
</comment>
<proteinExistence type="inferred from homology"/>
<sequence length="233" mass="25704">MGTISKTDLKQQIKDGIIVSCQALPGEPLYREEGGIMPLLVKAAQEAGAVGIRANSVRDIKEIKEVTTLPIIGIIKRDYPPQEPFITATMREVDELAALDIEVIALDCTKRERYDGLDIVDFIKQIKEKYPEQLFMADISTFEEGLTAYEAGIDFIGTTLSGYTSYSRQEEGPDIELVDRLCRAGIDVIAEGKIHYPDQVKIIHDLGVAGIVVGGAITRPKEIAERFISALHK</sequence>
<feature type="chain" id="PRO_0000387984" description="Putative N-acetylmannosamine-6-phosphate 2-epimerase">
    <location>
        <begin position="1"/>
        <end position="233"/>
    </location>
</feature>
<feature type="sequence conflict" description="In Ref. 2; CAC94860." evidence="1" ref="2">
    <original>K</original>
    <variation>Q</variation>
    <location>
        <position position="127"/>
    </location>
</feature>
<keyword id="KW-0119">Carbohydrate metabolism</keyword>
<keyword id="KW-0413">Isomerase</keyword>
<name>NANE_STRSE</name>
<dbReference type="EC" id="5.1.3.9"/>
<dbReference type="EMBL" id="AM946016">
    <property type="protein sequence ID" value="CAR46564.1"/>
    <property type="molecule type" value="Genomic_DNA"/>
</dbReference>
<dbReference type="EMBL" id="AJ416310">
    <property type="protein sequence ID" value="CAC94860.1"/>
    <property type="molecule type" value="Genomic_DNA"/>
</dbReference>
<dbReference type="RefSeq" id="WP_012027343.1">
    <property type="nucleotide sequence ID" value="NC_012925.1"/>
</dbReference>
<dbReference type="SMR" id="C5VXY0"/>
<dbReference type="KEGG" id="ssi:SSU1230"/>
<dbReference type="HOGENOM" id="CLU_086300_1_0_9"/>
<dbReference type="UniPathway" id="UPA00629">
    <property type="reaction ID" value="UER00682"/>
</dbReference>
<dbReference type="GO" id="GO:0005829">
    <property type="term" value="C:cytosol"/>
    <property type="evidence" value="ECO:0007669"/>
    <property type="project" value="TreeGrafter"/>
</dbReference>
<dbReference type="GO" id="GO:0047465">
    <property type="term" value="F:N-acylglucosamine-6-phosphate 2-epimerase activity"/>
    <property type="evidence" value="ECO:0007669"/>
    <property type="project" value="UniProtKB-EC"/>
</dbReference>
<dbReference type="GO" id="GO:0005975">
    <property type="term" value="P:carbohydrate metabolic process"/>
    <property type="evidence" value="ECO:0007669"/>
    <property type="project" value="UniProtKB-UniRule"/>
</dbReference>
<dbReference type="GO" id="GO:0006053">
    <property type="term" value="P:N-acetylmannosamine catabolic process"/>
    <property type="evidence" value="ECO:0007669"/>
    <property type="project" value="TreeGrafter"/>
</dbReference>
<dbReference type="GO" id="GO:0019262">
    <property type="term" value="P:N-acetylneuraminate catabolic process"/>
    <property type="evidence" value="ECO:0007669"/>
    <property type="project" value="UniProtKB-UniRule"/>
</dbReference>
<dbReference type="CDD" id="cd04729">
    <property type="entry name" value="NanE"/>
    <property type="match status" value="1"/>
</dbReference>
<dbReference type="FunFam" id="3.20.20.70:FF:000035">
    <property type="entry name" value="Putative N-acetylmannosamine-6-phosphate 2-epimerase"/>
    <property type="match status" value="1"/>
</dbReference>
<dbReference type="Gene3D" id="3.20.20.70">
    <property type="entry name" value="Aldolase class I"/>
    <property type="match status" value="1"/>
</dbReference>
<dbReference type="HAMAP" id="MF_01235">
    <property type="entry name" value="ManNAc6P_epimer"/>
    <property type="match status" value="1"/>
</dbReference>
<dbReference type="InterPro" id="IPR013785">
    <property type="entry name" value="Aldolase_TIM"/>
</dbReference>
<dbReference type="InterPro" id="IPR007260">
    <property type="entry name" value="NanE"/>
</dbReference>
<dbReference type="InterPro" id="IPR011060">
    <property type="entry name" value="RibuloseP-bd_barrel"/>
</dbReference>
<dbReference type="NCBIfam" id="NF002231">
    <property type="entry name" value="PRK01130.1"/>
    <property type="match status" value="1"/>
</dbReference>
<dbReference type="PANTHER" id="PTHR36204">
    <property type="entry name" value="N-ACETYLMANNOSAMINE-6-PHOSPHATE 2-EPIMERASE-RELATED"/>
    <property type="match status" value="1"/>
</dbReference>
<dbReference type="PANTHER" id="PTHR36204:SF1">
    <property type="entry name" value="N-ACETYLMANNOSAMINE-6-PHOSPHATE 2-EPIMERASE-RELATED"/>
    <property type="match status" value="1"/>
</dbReference>
<dbReference type="Pfam" id="PF04131">
    <property type="entry name" value="NanE"/>
    <property type="match status" value="1"/>
</dbReference>
<dbReference type="SUPFAM" id="SSF51366">
    <property type="entry name" value="Ribulose-phoshate binding barrel"/>
    <property type="match status" value="1"/>
</dbReference>
<evidence type="ECO:0000305" key="1"/>